<comment type="function">
    <text evidence="1">Catalyzes the deamination of dCTP to dUTP.</text>
</comment>
<comment type="catalytic activity">
    <reaction evidence="1">
        <text>dCTP + H2O + H(+) = dUTP + NH4(+)</text>
        <dbReference type="Rhea" id="RHEA:22680"/>
        <dbReference type="ChEBI" id="CHEBI:15377"/>
        <dbReference type="ChEBI" id="CHEBI:15378"/>
        <dbReference type="ChEBI" id="CHEBI:28938"/>
        <dbReference type="ChEBI" id="CHEBI:61481"/>
        <dbReference type="ChEBI" id="CHEBI:61555"/>
        <dbReference type="EC" id="3.5.4.13"/>
    </reaction>
</comment>
<comment type="pathway">
    <text evidence="1">Pyrimidine metabolism; dUMP biosynthesis; dUMP from dCTP (dUTP route): step 1/2.</text>
</comment>
<comment type="subunit">
    <text evidence="1">Homotrimer.</text>
</comment>
<comment type="similarity">
    <text evidence="1">Belongs to the dCTP deaminase family.</text>
</comment>
<evidence type="ECO:0000255" key="1">
    <source>
        <dbReference type="HAMAP-Rule" id="MF_00146"/>
    </source>
</evidence>
<accession>B9KHN3</accession>
<proteinExistence type="inferred from homology"/>
<sequence>MSAMPDHWIKEKALKEGMISPFVDHKEEAGVLSYGLSSYGYDARVDSKFKIFANTHSSIVDPKNFPQDSFIDKETDVCIMPPNSFMLAKTVEYFRIPKDVIVICVGKSTYARCGIVVSVTPLEPGWEGYVTLEFSNTAPLPVKVYAFEGACQFIFLAGNERCSISYDQVNGKYMRQGGVTLPIVS</sequence>
<organism>
    <name type="scientific">Anaplasma marginale (strain Florida)</name>
    <dbReference type="NCBI Taxonomy" id="320483"/>
    <lineage>
        <taxon>Bacteria</taxon>
        <taxon>Pseudomonadati</taxon>
        <taxon>Pseudomonadota</taxon>
        <taxon>Alphaproteobacteria</taxon>
        <taxon>Rickettsiales</taxon>
        <taxon>Anaplasmataceae</taxon>
        <taxon>Anaplasma</taxon>
    </lineage>
</organism>
<keyword id="KW-0378">Hydrolase</keyword>
<keyword id="KW-0546">Nucleotide metabolism</keyword>
<keyword id="KW-0547">Nucleotide-binding</keyword>
<keyword id="KW-1185">Reference proteome</keyword>
<reference key="1">
    <citation type="journal article" date="2009" name="BMC Genomics">
        <title>Conservation in the face of diversity: multistrain analysis of an intracellular bacterium.</title>
        <authorList>
            <person name="Dark M.J."/>
            <person name="Herndon D.R."/>
            <person name="Kappmeyer L.S."/>
            <person name="Gonzales M.P."/>
            <person name="Nordeen E."/>
            <person name="Palmer G.H."/>
            <person name="Knowles D.P. Jr."/>
            <person name="Brayton K.A."/>
        </authorList>
    </citation>
    <scope>NUCLEOTIDE SEQUENCE [LARGE SCALE GENOMIC DNA]</scope>
    <source>
        <strain>Florida</strain>
    </source>
</reference>
<protein>
    <recommendedName>
        <fullName evidence="1">dCTP deaminase</fullName>
        <ecNumber evidence="1">3.5.4.13</ecNumber>
    </recommendedName>
    <alternativeName>
        <fullName evidence="1">Deoxycytidine triphosphate deaminase</fullName>
    </alternativeName>
</protein>
<name>DCD_ANAMF</name>
<feature type="chain" id="PRO_1000123135" description="dCTP deaminase">
    <location>
        <begin position="1"/>
        <end position="185"/>
    </location>
</feature>
<feature type="active site" description="Proton donor/acceptor" evidence="1">
    <location>
        <position position="133"/>
    </location>
</feature>
<feature type="binding site" evidence="1">
    <location>
        <begin position="107"/>
        <end position="112"/>
    </location>
    <ligand>
        <name>dCTP</name>
        <dbReference type="ChEBI" id="CHEBI:61481"/>
    </ligand>
</feature>
<feature type="binding site" evidence="1">
    <location>
        <begin position="131"/>
        <end position="133"/>
    </location>
    <ligand>
        <name>dCTP</name>
        <dbReference type="ChEBI" id="CHEBI:61481"/>
    </ligand>
</feature>
<feature type="binding site" evidence="1">
    <location>
        <position position="152"/>
    </location>
    <ligand>
        <name>dCTP</name>
        <dbReference type="ChEBI" id="CHEBI:61481"/>
    </ligand>
</feature>
<feature type="binding site" evidence="1">
    <location>
        <position position="166"/>
    </location>
    <ligand>
        <name>dCTP</name>
        <dbReference type="ChEBI" id="CHEBI:61481"/>
    </ligand>
</feature>
<feature type="binding site" evidence="1">
    <location>
        <position position="176"/>
    </location>
    <ligand>
        <name>dCTP</name>
        <dbReference type="ChEBI" id="CHEBI:61481"/>
    </ligand>
</feature>
<dbReference type="EC" id="3.5.4.13" evidence="1"/>
<dbReference type="EMBL" id="CP001079">
    <property type="protein sequence ID" value="ACM48995.1"/>
    <property type="molecule type" value="Genomic_DNA"/>
</dbReference>
<dbReference type="RefSeq" id="WP_010262785.1">
    <property type="nucleotide sequence ID" value="NZ_AFMS01000025.1"/>
</dbReference>
<dbReference type="SMR" id="B9KHN3"/>
<dbReference type="STRING" id="320483.AMF_107"/>
<dbReference type="GeneID" id="7398569"/>
<dbReference type="KEGG" id="amf:AMF_107"/>
<dbReference type="eggNOG" id="COG0717">
    <property type="taxonomic scope" value="Bacteria"/>
</dbReference>
<dbReference type="HOGENOM" id="CLU_087476_4_0_5"/>
<dbReference type="UniPathway" id="UPA00610">
    <property type="reaction ID" value="UER00665"/>
</dbReference>
<dbReference type="Proteomes" id="UP000007307">
    <property type="component" value="Chromosome"/>
</dbReference>
<dbReference type="GO" id="GO:0008829">
    <property type="term" value="F:dCTP deaminase activity"/>
    <property type="evidence" value="ECO:0007669"/>
    <property type="project" value="UniProtKB-UniRule"/>
</dbReference>
<dbReference type="GO" id="GO:0000166">
    <property type="term" value="F:nucleotide binding"/>
    <property type="evidence" value="ECO:0007669"/>
    <property type="project" value="UniProtKB-KW"/>
</dbReference>
<dbReference type="GO" id="GO:0006226">
    <property type="term" value="P:dUMP biosynthetic process"/>
    <property type="evidence" value="ECO:0007669"/>
    <property type="project" value="UniProtKB-UniPathway"/>
</dbReference>
<dbReference type="GO" id="GO:0006229">
    <property type="term" value="P:dUTP biosynthetic process"/>
    <property type="evidence" value="ECO:0007669"/>
    <property type="project" value="UniProtKB-UniRule"/>
</dbReference>
<dbReference type="CDD" id="cd07557">
    <property type="entry name" value="trimeric_dUTPase"/>
    <property type="match status" value="1"/>
</dbReference>
<dbReference type="Gene3D" id="2.70.40.10">
    <property type="match status" value="1"/>
</dbReference>
<dbReference type="HAMAP" id="MF_00146">
    <property type="entry name" value="dCTP_deaminase"/>
    <property type="match status" value="1"/>
</dbReference>
<dbReference type="InterPro" id="IPR011962">
    <property type="entry name" value="dCTP_deaminase"/>
</dbReference>
<dbReference type="InterPro" id="IPR036157">
    <property type="entry name" value="dUTPase-like_sf"/>
</dbReference>
<dbReference type="InterPro" id="IPR033704">
    <property type="entry name" value="dUTPase_trimeric"/>
</dbReference>
<dbReference type="NCBIfam" id="TIGR02274">
    <property type="entry name" value="dCTP_deam"/>
    <property type="match status" value="1"/>
</dbReference>
<dbReference type="PANTHER" id="PTHR42680">
    <property type="entry name" value="DCTP DEAMINASE"/>
    <property type="match status" value="1"/>
</dbReference>
<dbReference type="PANTHER" id="PTHR42680:SF3">
    <property type="entry name" value="DCTP DEAMINASE"/>
    <property type="match status" value="1"/>
</dbReference>
<dbReference type="Pfam" id="PF22769">
    <property type="entry name" value="DCD"/>
    <property type="match status" value="1"/>
</dbReference>
<dbReference type="SUPFAM" id="SSF51283">
    <property type="entry name" value="dUTPase-like"/>
    <property type="match status" value="1"/>
</dbReference>
<gene>
    <name evidence="1" type="primary">dcd</name>
    <name type="ordered locus">AMF_107</name>
</gene>